<name>NUSB_TREPS</name>
<sequence>MSEVFPKIGRRRARILAFQALFAWDAAGITPETLTQFTWLRRNPPPSTQDLGFSRLLFLGTLEHLREIDGCVSSRLEHWDFVRLNKVDKAILRLSAYSLLFQKDIPPVVVIHEAVSIARDFGTDDSFRFVNGVLDNIAKSA</sequence>
<comment type="function">
    <text evidence="1">Involved in transcription antitermination. Required for transcription of ribosomal RNA (rRNA) genes. Binds specifically to the boxA antiterminator sequence of the ribosomal RNA (rrn) operons.</text>
</comment>
<comment type="similarity">
    <text evidence="1">Belongs to the NusB family.</text>
</comment>
<feature type="chain" id="PRO_1000092598" description="Transcription antitermination protein NusB">
    <location>
        <begin position="1"/>
        <end position="141"/>
    </location>
</feature>
<proteinExistence type="inferred from homology"/>
<protein>
    <recommendedName>
        <fullName evidence="1">Transcription antitermination protein NusB</fullName>
    </recommendedName>
    <alternativeName>
        <fullName evidence="1">Antitermination factor NusB</fullName>
    </alternativeName>
</protein>
<reference key="1">
    <citation type="journal article" date="2008" name="BMC Microbiol.">
        <title>Complete genome sequence of Treponema pallidum ssp. pallidum strain SS14 determined with oligonucleotide arrays.</title>
        <authorList>
            <person name="Matejkova P."/>
            <person name="Strouhal M."/>
            <person name="Smajs D."/>
            <person name="Norris S.J."/>
            <person name="Palzkill T."/>
            <person name="Petrosino J.F."/>
            <person name="Sodergren E."/>
            <person name="Norton J.E."/>
            <person name="Singh J."/>
            <person name="Richmond T.A."/>
            <person name="Molla M.N."/>
            <person name="Albert T.J."/>
            <person name="Weinstock G.M."/>
        </authorList>
    </citation>
    <scope>NUCLEOTIDE SEQUENCE [LARGE SCALE GENOMIC DNA]</scope>
    <source>
        <strain>SS14</strain>
    </source>
</reference>
<gene>
    <name evidence="1" type="primary">nusB</name>
    <name type="ordered locus">TPASS_1015</name>
</gene>
<accession>B2S4Q2</accession>
<organism>
    <name type="scientific">Treponema pallidum subsp. pallidum (strain SS14)</name>
    <dbReference type="NCBI Taxonomy" id="455434"/>
    <lineage>
        <taxon>Bacteria</taxon>
        <taxon>Pseudomonadati</taxon>
        <taxon>Spirochaetota</taxon>
        <taxon>Spirochaetia</taxon>
        <taxon>Spirochaetales</taxon>
        <taxon>Treponemataceae</taxon>
        <taxon>Treponema</taxon>
    </lineage>
</organism>
<keyword id="KW-0694">RNA-binding</keyword>
<keyword id="KW-0804">Transcription</keyword>
<keyword id="KW-0889">Transcription antitermination</keyword>
<keyword id="KW-0805">Transcription regulation</keyword>
<dbReference type="EMBL" id="CP000805">
    <property type="protein sequence ID" value="ACD71431.1"/>
    <property type="molecule type" value="Genomic_DNA"/>
</dbReference>
<dbReference type="RefSeq" id="WP_010882459.1">
    <property type="nucleotide sequence ID" value="NC_021508.1"/>
</dbReference>
<dbReference type="SMR" id="B2S4Q2"/>
<dbReference type="GeneID" id="93876762"/>
<dbReference type="KEGG" id="tpp:TPASS_1015"/>
<dbReference type="PATRIC" id="fig|455434.6.peg.1003"/>
<dbReference type="Proteomes" id="UP000001202">
    <property type="component" value="Chromosome"/>
</dbReference>
<dbReference type="GO" id="GO:0005829">
    <property type="term" value="C:cytosol"/>
    <property type="evidence" value="ECO:0007669"/>
    <property type="project" value="TreeGrafter"/>
</dbReference>
<dbReference type="GO" id="GO:0003723">
    <property type="term" value="F:RNA binding"/>
    <property type="evidence" value="ECO:0007669"/>
    <property type="project" value="UniProtKB-UniRule"/>
</dbReference>
<dbReference type="GO" id="GO:0006353">
    <property type="term" value="P:DNA-templated transcription termination"/>
    <property type="evidence" value="ECO:0007669"/>
    <property type="project" value="UniProtKB-UniRule"/>
</dbReference>
<dbReference type="GO" id="GO:0031564">
    <property type="term" value="P:transcription antitermination"/>
    <property type="evidence" value="ECO:0007669"/>
    <property type="project" value="UniProtKB-KW"/>
</dbReference>
<dbReference type="CDD" id="cd00619">
    <property type="entry name" value="Terminator_NusB"/>
    <property type="match status" value="1"/>
</dbReference>
<dbReference type="Gene3D" id="1.10.940.10">
    <property type="entry name" value="NusB-like"/>
    <property type="match status" value="1"/>
</dbReference>
<dbReference type="HAMAP" id="MF_00073">
    <property type="entry name" value="NusB"/>
    <property type="match status" value="1"/>
</dbReference>
<dbReference type="InterPro" id="IPR035926">
    <property type="entry name" value="NusB-like_sf"/>
</dbReference>
<dbReference type="InterPro" id="IPR011605">
    <property type="entry name" value="NusB_fam"/>
</dbReference>
<dbReference type="InterPro" id="IPR006027">
    <property type="entry name" value="NusB_RsmB_TIM44"/>
</dbReference>
<dbReference type="NCBIfam" id="TIGR01951">
    <property type="entry name" value="nusB"/>
    <property type="match status" value="1"/>
</dbReference>
<dbReference type="PANTHER" id="PTHR11078:SF3">
    <property type="entry name" value="ANTITERMINATION NUSB DOMAIN-CONTAINING PROTEIN"/>
    <property type="match status" value="1"/>
</dbReference>
<dbReference type="PANTHER" id="PTHR11078">
    <property type="entry name" value="N UTILIZATION SUBSTANCE PROTEIN B-RELATED"/>
    <property type="match status" value="1"/>
</dbReference>
<dbReference type="Pfam" id="PF01029">
    <property type="entry name" value="NusB"/>
    <property type="match status" value="1"/>
</dbReference>
<dbReference type="SUPFAM" id="SSF48013">
    <property type="entry name" value="NusB-like"/>
    <property type="match status" value="1"/>
</dbReference>
<evidence type="ECO:0000255" key="1">
    <source>
        <dbReference type="HAMAP-Rule" id="MF_00073"/>
    </source>
</evidence>